<gene>
    <name evidence="1" type="primary">rplB</name>
    <name type="ordered locus">Noc_2321</name>
</gene>
<comment type="function">
    <text evidence="1">One of the primary rRNA binding proteins. Required for association of the 30S and 50S subunits to form the 70S ribosome, for tRNA binding and peptide bond formation. It has been suggested to have peptidyltransferase activity; this is somewhat controversial. Makes several contacts with the 16S rRNA in the 70S ribosome.</text>
</comment>
<comment type="subunit">
    <text evidence="1">Part of the 50S ribosomal subunit. Forms a bridge to the 30S subunit in the 70S ribosome.</text>
</comment>
<comment type="similarity">
    <text evidence="1">Belongs to the universal ribosomal protein uL2 family.</text>
</comment>
<name>RL2_NITOC</name>
<keyword id="KW-1185">Reference proteome</keyword>
<keyword id="KW-0687">Ribonucleoprotein</keyword>
<keyword id="KW-0689">Ribosomal protein</keyword>
<keyword id="KW-0694">RNA-binding</keyword>
<keyword id="KW-0699">rRNA-binding</keyword>
<feature type="chain" id="PRO_0000237216" description="Large ribosomal subunit protein uL2">
    <location>
        <begin position="1"/>
        <end position="274"/>
    </location>
</feature>
<feature type="region of interest" description="Disordered" evidence="2">
    <location>
        <begin position="222"/>
        <end position="257"/>
    </location>
</feature>
<proteinExistence type="inferred from homology"/>
<organism>
    <name type="scientific">Nitrosococcus oceani (strain ATCC 19707 / BCRC 17464 / JCM 30415 / NCIMB 11848 / C-107)</name>
    <dbReference type="NCBI Taxonomy" id="323261"/>
    <lineage>
        <taxon>Bacteria</taxon>
        <taxon>Pseudomonadati</taxon>
        <taxon>Pseudomonadota</taxon>
        <taxon>Gammaproteobacteria</taxon>
        <taxon>Chromatiales</taxon>
        <taxon>Chromatiaceae</taxon>
        <taxon>Nitrosococcus</taxon>
    </lineage>
</organism>
<protein>
    <recommendedName>
        <fullName evidence="1">Large ribosomal subunit protein uL2</fullName>
    </recommendedName>
    <alternativeName>
        <fullName evidence="3">50S ribosomal protein L2</fullName>
    </alternativeName>
</protein>
<evidence type="ECO:0000255" key="1">
    <source>
        <dbReference type="HAMAP-Rule" id="MF_01320"/>
    </source>
</evidence>
<evidence type="ECO:0000256" key="2">
    <source>
        <dbReference type="SAM" id="MobiDB-lite"/>
    </source>
</evidence>
<evidence type="ECO:0000305" key="3"/>
<accession>Q3J8R7</accession>
<reference key="1">
    <citation type="journal article" date="2006" name="Appl. Environ. Microbiol.">
        <title>Complete genome sequence of the marine, chemolithoautotrophic, ammonia-oxidizing bacterium Nitrosococcus oceani ATCC 19707.</title>
        <authorList>
            <person name="Klotz M.G."/>
            <person name="Arp D.J."/>
            <person name="Chain P.S.G."/>
            <person name="El-Sheikh A.F."/>
            <person name="Hauser L.J."/>
            <person name="Hommes N.G."/>
            <person name="Larimer F.W."/>
            <person name="Malfatti S.A."/>
            <person name="Norton J.M."/>
            <person name="Poret-Peterson A.T."/>
            <person name="Vergez L.M."/>
            <person name="Ward B.B."/>
        </authorList>
    </citation>
    <scope>NUCLEOTIDE SEQUENCE [LARGE SCALE GENOMIC DNA]</scope>
    <source>
        <strain>ATCC 19707 / BCRC 17464 / JCM 30415 / NCIMB 11848 / C-107</strain>
    </source>
</reference>
<dbReference type="EMBL" id="CP000127">
    <property type="protein sequence ID" value="ABA58779.1"/>
    <property type="molecule type" value="Genomic_DNA"/>
</dbReference>
<dbReference type="RefSeq" id="WP_011330927.1">
    <property type="nucleotide sequence ID" value="NC_007484.1"/>
</dbReference>
<dbReference type="SMR" id="Q3J8R7"/>
<dbReference type="FunCoup" id="Q3J8R7">
    <property type="interactions" value="745"/>
</dbReference>
<dbReference type="STRING" id="323261.Noc_2321"/>
<dbReference type="KEGG" id="noc:Noc_2321"/>
<dbReference type="eggNOG" id="COG0090">
    <property type="taxonomic scope" value="Bacteria"/>
</dbReference>
<dbReference type="HOGENOM" id="CLU_036235_2_1_6"/>
<dbReference type="InParanoid" id="Q3J8R7"/>
<dbReference type="Proteomes" id="UP000006838">
    <property type="component" value="Chromosome"/>
</dbReference>
<dbReference type="GO" id="GO:0015934">
    <property type="term" value="C:large ribosomal subunit"/>
    <property type="evidence" value="ECO:0007669"/>
    <property type="project" value="InterPro"/>
</dbReference>
<dbReference type="GO" id="GO:0019843">
    <property type="term" value="F:rRNA binding"/>
    <property type="evidence" value="ECO:0007669"/>
    <property type="project" value="UniProtKB-UniRule"/>
</dbReference>
<dbReference type="GO" id="GO:0003735">
    <property type="term" value="F:structural constituent of ribosome"/>
    <property type="evidence" value="ECO:0007669"/>
    <property type="project" value="InterPro"/>
</dbReference>
<dbReference type="GO" id="GO:0016740">
    <property type="term" value="F:transferase activity"/>
    <property type="evidence" value="ECO:0007669"/>
    <property type="project" value="InterPro"/>
</dbReference>
<dbReference type="GO" id="GO:0002181">
    <property type="term" value="P:cytoplasmic translation"/>
    <property type="evidence" value="ECO:0007669"/>
    <property type="project" value="TreeGrafter"/>
</dbReference>
<dbReference type="FunFam" id="2.30.30.30:FF:000001">
    <property type="entry name" value="50S ribosomal protein L2"/>
    <property type="match status" value="1"/>
</dbReference>
<dbReference type="FunFam" id="2.40.50.140:FF:000003">
    <property type="entry name" value="50S ribosomal protein L2"/>
    <property type="match status" value="1"/>
</dbReference>
<dbReference type="FunFam" id="4.10.950.10:FF:000001">
    <property type="entry name" value="50S ribosomal protein L2"/>
    <property type="match status" value="1"/>
</dbReference>
<dbReference type="Gene3D" id="2.30.30.30">
    <property type="match status" value="1"/>
</dbReference>
<dbReference type="Gene3D" id="2.40.50.140">
    <property type="entry name" value="Nucleic acid-binding proteins"/>
    <property type="match status" value="1"/>
</dbReference>
<dbReference type="Gene3D" id="4.10.950.10">
    <property type="entry name" value="Ribosomal protein L2, domain 3"/>
    <property type="match status" value="1"/>
</dbReference>
<dbReference type="HAMAP" id="MF_01320_B">
    <property type="entry name" value="Ribosomal_uL2_B"/>
    <property type="match status" value="1"/>
</dbReference>
<dbReference type="InterPro" id="IPR012340">
    <property type="entry name" value="NA-bd_OB-fold"/>
</dbReference>
<dbReference type="InterPro" id="IPR014722">
    <property type="entry name" value="Rib_uL2_dom2"/>
</dbReference>
<dbReference type="InterPro" id="IPR002171">
    <property type="entry name" value="Ribosomal_uL2"/>
</dbReference>
<dbReference type="InterPro" id="IPR005880">
    <property type="entry name" value="Ribosomal_uL2_bac/org-type"/>
</dbReference>
<dbReference type="InterPro" id="IPR022669">
    <property type="entry name" value="Ribosomal_uL2_C"/>
</dbReference>
<dbReference type="InterPro" id="IPR022671">
    <property type="entry name" value="Ribosomal_uL2_CS"/>
</dbReference>
<dbReference type="InterPro" id="IPR014726">
    <property type="entry name" value="Ribosomal_uL2_dom3"/>
</dbReference>
<dbReference type="InterPro" id="IPR022666">
    <property type="entry name" value="Ribosomal_uL2_RNA-bd_dom"/>
</dbReference>
<dbReference type="InterPro" id="IPR008991">
    <property type="entry name" value="Translation_prot_SH3-like_sf"/>
</dbReference>
<dbReference type="NCBIfam" id="TIGR01171">
    <property type="entry name" value="rplB_bact"/>
    <property type="match status" value="1"/>
</dbReference>
<dbReference type="PANTHER" id="PTHR13691:SF5">
    <property type="entry name" value="LARGE RIBOSOMAL SUBUNIT PROTEIN UL2M"/>
    <property type="match status" value="1"/>
</dbReference>
<dbReference type="PANTHER" id="PTHR13691">
    <property type="entry name" value="RIBOSOMAL PROTEIN L2"/>
    <property type="match status" value="1"/>
</dbReference>
<dbReference type="Pfam" id="PF00181">
    <property type="entry name" value="Ribosomal_L2"/>
    <property type="match status" value="1"/>
</dbReference>
<dbReference type="Pfam" id="PF03947">
    <property type="entry name" value="Ribosomal_L2_C"/>
    <property type="match status" value="1"/>
</dbReference>
<dbReference type="PIRSF" id="PIRSF002158">
    <property type="entry name" value="Ribosomal_L2"/>
    <property type="match status" value="1"/>
</dbReference>
<dbReference type="SMART" id="SM01383">
    <property type="entry name" value="Ribosomal_L2"/>
    <property type="match status" value="1"/>
</dbReference>
<dbReference type="SMART" id="SM01382">
    <property type="entry name" value="Ribosomal_L2_C"/>
    <property type="match status" value="1"/>
</dbReference>
<dbReference type="SUPFAM" id="SSF50249">
    <property type="entry name" value="Nucleic acid-binding proteins"/>
    <property type="match status" value="1"/>
</dbReference>
<dbReference type="SUPFAM" id="SSF50104">
    <property type="entry name" value="Translation proteins SH3-like domain"/>
    <property type="match status" value="1"/>
</dbReference>
<dbReference type="PROSITE" id="PS00467">
    <property type="entry name" value="RIBOSOMAL_L2"/>
    <property type="match status" value="1"/>
</dbReference>
<sequence>MPIVKAKPTSAGRRFVVQVTSLELYKGRPHPALTKKLSKSGGRNNQGRITVRHCGGGHKRLYRIIDFRRDKIDVLGRVKRIEYDPNRSAHIALINYSDGEKRYIIAPKAVKVGDIITSGREAPIRDGNCLPLRNIPVGTLVHCIELKPGKGAQIARSAGSSCQLVAREGDHAMLRLRSGEIRKVPLECRATIGEVGNDGHGLRSLGKAGAMRWRGKRPTVRGVAMNPVDHPHGGGEGRTSGGRHPVSPWGVPTKGYKTRRNKRTGKFIVRRRKK</sequence>